<reference key="1">
    <citation type="journal article" date="2007" name="J. Bacteriol.">
        <title>The genome sequence of avian pathogenic Escherichia coli strain O1:K1:H7 shares strong similarities with human extraintestinal pathogenic E. coli genomes.</title>
        <authorList>
            <person name="Johnson T.J."/>
            <person name="Kariyawasam S."/>
            <person name="Wannemuehler Y."/>
            <person name="Mangiamele P."/>
            <person name="Johnson S.J."/>
            <person name="Doetkott C."/>
            <person name="Skyberg J.A."/>
            <person name="Lynne A.M."/>
            <person name="Johnson J.R."/>
            <person name="Nolan L.K."/>
        </authorList>
    </citation>
    <scope>NUCLEOTIDE SEQUENCE [LARGE SCALE GENOMIC DNA]</scope>
</reference>
<sequence>MLSKQIPLGIYEKALPAGECWLERLQLAKTLGFDFVEMSVDETDDRLSRLDWSREQRLALVNAIVETGVRVPSMCLSAHRRFPLGSEDDAVRAQGLEIMRKAIQFAQDVGIRVIQLAGYDVYYQEANNETRRRFRDGLKESVEMASRAQVTLAMEIMDYPLMNSISKALGYAHYFNNPWFQLYPDIGNLSAWDNDVQMELQAGIGHIVAVHVKDTKPGVFKNVPFGEGVVDFERCFETLKQSGYCGPYLIEMWSETAEDPAAEVAKARDWVKARMAKAGMVEAA</sequence>
<keyword id="KW-0413">Isomerase</keyword>
<keyword id="KW-1185">Reference proteome</keyword>
<comment type="function">
    <text evidence="1">Catalyzes the isomerization of L-xylulose-5-phosphate to L-ribulose-5-phosphate. Is involved in the anaerobic L-ascorbate utilization.</text>
</comment>
<comment type="catalytic activity">
    <reaction evidence="1">
        <text>L-ribulose 5-phosphate = L-xylulose 5-phosphate</text>
        <dbReference type="Rhea" id="RHEA:18497"/>
        <dbReference type="ChEBI" id="CHEBI:57829"/>
        <dbReference type="ChEBI" id="CHEBI:58226"/>
        <dbReference type="EC" id="5.1.3.22"/>
    </reaction>
</comment>
<comment type="pathway">
    <text evidence="1">Cofactor degradation; L-ascorbate degradation; D-xylulose 5-phosphate from L-ascorbate: step 3/4.</text>
</comment>
<comment type="induction">
    <text evidence="1">Induced by L-ascorbate. Repressed by UlaR.</text>
</comment>
<comment type="similarity">
    <text evidence="1">Belongs to the L-ribulose-5-phosphate 3-epimerase family.</text>
</comment>
<evidence type="ECO:0000255" key="1">
    <source>
        <dbReference type="HAMAP-Rule" id="MF_01951"/>
    </source>
</evidence>
<protein>
    <recommendedName>
        <fullName evidence="1">L-ribulose-5-phosphate 3-epimerase UlaE</fullName>
        <ecNumber evidence="1">5.1.3.22</ecNumber>
    </recommendedName>
    <alternativeName>
        <fullName evidence="1">L-ascorbate utilization protein E</fullName>
    </alternativeName>
    <alternativeName>
        <fullName evidence="1">L-xylulose-5-phosphate 3-epimerase</fullName>
    </alternativeName>
</protein>
<feature type="chain" id="PRO_1000070632" description="L-ribulose-5-phosphate 3-epimerase UlaE">
    <location>
        <begin position="1"/>
        <end position="284"/>
    </location>
</feature>
<name>ULAE_ECOK1</name>
<dbReference type="EC" id="5.1.3.22" evidence="1"/>
<dbReference type="EMBL" id="CP000468">
    <property type="protein sequence ID" value="ABJ03742.1"/>
    <property type="molecule type" value="Genomic_DNA"/>
</dbReference>
<dbReference type="RefSeq" id="WP_000949496.1">
    <property type="nucleotide sequence ID" value="NZ_CADILS010000035.1"/>
</dbReference>
<dbReference type="SMR" id="A1AJA2"/>
<dbReference type="KEGG" id="ecv:APECO1_2195"/>
<dbReference type="HOGENOM" id="CLU_082738_0_0_6"/>
<dbReference type="UniPathway" id="UPA00263">
    <property type="reaction ID" value="UER00379"/>
</dbReference>
<dbReference type="Proteomes" id="UP000008216">
    <property type="component" value="Chromosome"/>
</dbReference>
<dbReference type="GO" id="GO:0016861">
    <property type="term" value="F:intramolecular oxidoreductase activity, interconverting aldoses and ketoses"/>
    <property type="evidence" value="ECO:0007669"/>
    <property type="project" value="InterPro"/>
</dbReference>
<dbReference type="GO" id="GO:0034015">
    <property type="term" value="F:L-ribulose-5-phosphate 3-epimerase activity"/>
    <property type="evidence" value="ECO:0007669"/>
    <property type="project" value="UniProtKB-UniRule"/>
</dbReference>
<dbReference type="GO" id="GO:0019854">
    <property type="term" value="P:L-ascorbic acid catabolic process"/>
    <property type="evidence" value="ECO:0007669"/>
    <property type="project" value="UniProtKB-UniRule"/>
</dbReference>
<dbReference type="FunFam" id="3.20.20.150:FF:000003">
    <property type="entry name" value="L-ribulose-5-phosphate 3-epimerase UlaE"/>
    <property type="match status" value="1"/>
</dbReference>
<dbReference type="Gene3D" id="3.20.20.150">
    <property type="entry name" value="Divalent-metal-dependent TIM barrel enzymes"/>
    <property type="match status" value="1"/>
</dbReference>
<dbReference type="HAMAP" id="MF_01951">
    <property type="entry name" value="UlaE"/>
    <property type="match status" value="1"/>
</dbReference>
<dbReference type="InterPro" id="IPR004560">
    <property type="entry name" value="L-Ru-5P_3-Epase"/>
</dbReference>
<dbReference type="InterPro" id="IPR023492">
    <property type="entry name" value="L-Ru-5P_3-Epase_Enterobacteria"/>
</dbReference>
<dbReference type="InterPro" id="IPR050417">
    <property type="entry name" value="Sugar_Epim/Isomerase"/>
</dbReference>
<dbReference type="InterPro" id="IPR036237">
    <property type="entry name" value="Xyl_isomerase-like_sf"/>
</dbReference>
<dbReference type="InterPro" id="IPR013022">
    <property type="entry name" value="Xyl_isomerase-like_TIM-brl"/>
</dbReference>
<dbReference type="NCBIfam" id="TIGR00542">
    <property type="entry name" value="hxl6Piso_put"/>
    <property type="match status" value="1"/>
</dbReference>
<dbReference type="NCBIfam" id="NF009688">
    <property type="entry name" value="PRK13209.1"/>
    <property type="match status" value="1"/>
</dbReference>
<dbReference type="NCBIfam" id="NF009689">
    <property type="entry name" value="PRK13210.1"/>
    <property type="match status" value="1"/>
</dbReference>
<dbReference type="PANTHER" id="PTHR43489">
    <property type="entry name" value="ISOMERASE"/>
    <property type="match status" value="1"/>
</dbReference>
<dbReference type="PANTHER" id="PTHR43489:SF8">
    <property type="entry name" value="L-RIBULOSE-5-PHOSPHATE 3-EPIMERASE ULAE"/>
    <property type="match status" value="1"/>
</dbReference>
<dbReference type="Pfam" id="PF01261">
    <property type="entry name" value="AP_endonuc_2"/>
    <property type="match status" value="1"/>
</dbReference>
<dbReference type="SUPFAM" id="SSF51658">
    <property type="entry name" value="Xylose isomerase-like"/>
    <property type="match status" value="1"/>
</dbReference>
<proteinExistence type="inferred from homology"/>
<gene>
    <name evidence="1" type="primary">ulaE</name>
    <name type="ordered locus">Ecok1_42480</name>
    <name type="ORF">APECO1_2195</name>
</gene>
<organism>
    <name type="scientific">Escherichia coli O1:K1 / APEC</name>
    <dbReference type="NCBI Taxonomy" id="405955"/>
    <lineage>
        <taxon>Bacteria</taxon>
        <taxon>Pseudomonadati</taxon>
        <taxon>Pseudomonadota</taxon>
        <taxon>Gammaproteobacteria</taxon>
        <taxon>Enterobacterales</taxon>
        <taxon>Enterobacteriaceae</taxon>
        <taxon>Escherichia</taxon>
    </lineage>
</organism>
<accession>A1AJA2</accession>